<organism>
    <name type="scientific">Nitratidesulfovibrio vulgaris (strain DP4)</name>
    <name type="common">Desulfovibrio vulgaris</name>
    <dbReference type="NCBI Taxonomy" id="391774"/>
    <lineage>
        <taxon>Bacteria</taxon>
        <taxon>Pseudomonadati</taxon>
        <taxon>Thermodesulfobacteriota</taxon>
        <taxon>Desulfovibrionia</taxon>
        <taxon>Desulfovibrionales</taxon>
        <taxon>Desulfovibrionaceae</taxon>
        <taxon>Nitratidesulfovibrio</taxon>
    </lineage>
</organism>
<keyword id="KW-0963">Cytoplasm</keyword>
<keyword id="KW-0396">Initiation factor</keyword>
<keyword id="KW-0648">Protein biosynthesis</keyword>
<dbReference type="EMBL" id="CP000527">
    <property type="protein sequence ID" value="ABM27731.1"/>
    <property type="molecule type" value="Genomic_DNA"/>
</dbReference>
<dbReference type="RefSeq" id="WP_010939807.1">
    <property type="nucleotide sequence ID" value="NC_008751.1"/>
</dbReference>
<dbReference type="SMR" id="A1VBB5"/>
<dbReference type="KEGG" id="dvl:Dvul_0708"/>
<dbReference type="HOGENOM" id="CLU_054919_3_2_7"/>
<dbReference type="Proteomes" id="UP000009173">
    <property type="component" value="Chromosome"/>
</dbReference>
<dbReference type="GO" id="GO:0005829">
    <property type="term" value="C:cytosol"/>
    <property type="evidence" value="ECO:0007669"/>
    <property type="project" value="TreeGrafter"/>
</dbReference>
<dbReference type="GO" id="GO:0016020">
    <property type="term" value="C:membrane"/>
    <property type="evidence" value="ECO:0007669"/>
    <property type="project" value="TreeGrafter"/>
</dbReference>
<dbReference type="GO" id="GO:0043022">
    <property type="term" value="F:ribosome binding"/>
    <property type="evidence" value="ECO:0007669"/>
    <property type="project" value="TreeGrafter"/>
</dbReference>
<dbReference type="GO" id="GO:0003743">
    <property type="term" value="F:translation initiation factor activity"/>
    <property type="evidence" value="ECO:0007669"/>
    <property type="project" value="UniProtKB-UniRule"/>
</dbReference>
<dbReference type="GO" id="GO:0032790">
    <property type="term" value="P:ribosome disassembly"/>
    <property type="evidence" value="ECO:0007669"/>
    <property type="project" value="TreeGrafter"/>
</dbReference>
<dbReference type="FunFam" id="3.10.20.80:FF:000001">
    <property type="entry name" value="Translation initiation factor IF-3"/>
    <property type="match status" value="1"/>
</dbReference>
<dbReference type="FunFam" id="3.30.110.10:FF:000001">
    <property type="entry name" value="Translation initiation factor IF-3"/>
    <property type="match status" value="1"/>
</dbReference>
<dbReference type="Gene3D" id="3.30.110.10">
    <property type="entry name" value="Translation initiation factor 3 (IF-3), C-terminal domain"/>
    <property type="match status" value="1"/>
</dbReference>
<dbReference type="Gene3D" id="3.10.20.80">
    <property type="entry name" value="Translation initiation factor 3 (IF-3), N-terminal domain"/>
    <property type="match status" value="1"/>
</dbReference>
<dbReference type="HAMAP" id="MF_00080">
    <property type="entry name" value="IF_3"/>
    <property type="match status" value="1"/>
</dbReference>
<dbReference type="InterPro" id="IPR036788">
    <property type="entry name" value="T_IF-3_C_sf"/>
</dbReference>
<dbReference type="InterPro" id="IPR036787">
    <property type="entry name" value="T_IF-3_N_sf"/>
</dbReference>
<dbReference type="InterPro" id="IPR019813">
    <property type="entry name" value="Translation_initiation_fac3_CS"/>
</dbReference>
<dbReference type="InterPro" id="IPR001288">
    <property type="entry name" value="Translation_initiation_fac_3"/>
</dbReference>
<dbReference type="InterPro" id="IPR019815">
    <property type="entry name" value="Translation_initiation_fac_3_C"/>
</dbReference>
<dbReference type="InterPro" id="IPR019814">
    <property type="entry name" value="Translation_initiation_fac_3_N"/>
</dbReference>
<dbReference type="NCBIfam" id="TIGR00168">
    <property type="entry name" value="infC"/>
    <property type="match status" value="1"/>
</dbReference>
<dbReference type="PANTHER" id="PTHR10938">
    <property type="entry name" value="TRANSLATION INITIATION FACTOR IF-3"/>
    <property type="match status" value="1"/>
</dbReference>
<dbReference type="PANTHER" id="PTHR10938:SF0">
    <property type="entry name" value="TRANSLATION INITIATION FACTOR IF-3, MITOCHONDRIAL"/>
    <property type="match status" value="1"/>
</dbReference>
<dbReference type="Pfam" id="PF00707">
    <property type="entry name" value="IF3_C"/>
    <property type="match status" value="1"/>
</dbReference>
<dbReference type="Pfam" id="PF05198">
    <property type="entry name" value="IF3_N"/>
    <property type="match status" value="1"/>
</dbReference>
<dbReference type="SUPFAM" id="SSF55200">
    <property type="entry name" value="Translation initiation factor IF3, C-terminal domain"/>
    <property type="match status" value="1"/>
</dbReference>
<dbReference type="SUPFAM" id="SSF54364">
    <property type="entry name" value="Translation initiation factor IF3, N-terminal domain"/>
    <property type="match status" value="1"/>
</dbReference>
<dbReference type="PROSITE" id="PS00938">
    <property type="entry name" value="IF3"/>
    <property type="match status" value="1"/>
</dbReference>
<evidence type="ECO:0000255" key="1">
    <source>
        <dbReference type="HAMAP-Rule" id="MF_00080"/>
    </source>
</evidence>
<protein>
    <recommendedName>
        <fullName evidence="1">Translation initiation factor IF-3</fullName>
    </recommendedName>
</protein>
<reference key="1">
    <citation type="journal article" date="2009" name="Environ. Microbiol.">
        <title>Contribution of mobile genetic elements to Desulfovibrio vulgaris genome plasticity.</title>
        <authorList>
            <person name="Walker C.B."/>
            <person name="Stolyar S."/>
            <person name="Chivian D."/>
            <person name="Pinel N."/>
            <person name="Gabster J.A."/>
            <person name="Dehal P.S."/>
            <person name="He Z."/>
            <person name="Yang Z.K."/>
            <person name="Yen H.C."/>
            <person name="Zhou J."/>
            <person name="Wall J.D."/>
            <person name="Hazen T.C."/>
            <person name="Arkin A.P."/>
            <person name="Stahl D.A."/>
        </authorList>
    </citation>
    <scope>NUCLEOTIDE SEQUENCE [LARGE SCALE GENOMIC DNA]</scope>
    <source>
        <strain>DP4</strain>
    </source>
</reference>
<proteinExistence type="inferred from homology"/>
<accession>A1VBB5</accession>
<gene>
    <name evidence="1" type="primary">infC</name>
    <name type="ordered locus">Dvul_0708</name>
</gene>
<sequence>MRRDVPQDSVRRNEQIRAREVRLIGAEGEQLGIISRNDAIALAKEKGLDLVEVAATADPPVCRVMDYGKYKYEQQKKKQEAKKRQTVVQIKEIKVRPKTDEHDYQTKLKHVRRFLEEGDRCKVTVFFRGREIVHKDRGLTILDRFVEDTKDLAKLDQEARAEGRTLQMMLAPIPKK</sequence>
<comment type="function">
    <text evidence="1">IF-3 binds to the 30S ribosomal subunit and shifts the equilibrium between 70S ribosomes and their 50S and 30S subunits in favor of the free subunits, thus enhancing the availability of 30S subunits on which protein synthesis initiation begins.</text>
</comment>
<comment type="subunit">
    <text evidence="1">Monomer.</text>
</comment>
<comment type="subcellular location">
    <subcellularLocation>
        <location evidence="1">Cytoplasm</location>
    </subcellularLocation>
</comment>
<comment type="similarity">
    <text evidence="1">Belongs to the IF-3 family.</text>
</comment>
<feature type="chain" id="PRO_1000004540" description="Translation initiation factor IF-3">
    <location>
        <begin position="1"/>
        <end position="176"/>
    </location>
</feature>
<name>IF3_NITV4</name>